<comment type="function">
    <text evidence="1">GTPase that plays an essential role in the late steps of ribosome biogenesis.</text>
</comment>
<comment type="subunit">
    <text evidence="1">Associates with the 50S ribosomal subunit.</text>
</comment>
<comment type="similarity">
    <text evidence="1">Belongs to the TRAFAC class TrmE-Era-EngA-EngB-Septin-like GTPase superfamily. EngA (Der) GTPase family.</text>
</comment>
<name>DER_ROSDO</name>
<dbReference type="EMBL" id="CP000362">
    <property type="protein sequence ID" value="ABG31401.1"/>
    <property type="molecule type" value="Genomic_DNA"/>
</dbReference>
<dbReference type="RefSeq" id="WP_011568020.1">
    <property type="nucleotide sequence ID" value="NC_008209.1"/>
</dbReference>
<dbReference type="SMR" id="Q169E2"/>
<dbReference type="STRING" id="375451.RD1_1783"/>
<dbReference type="KEGG" id="rde:RD1_1783"/>
<dbReference type="eggNOG" id="COG1160">
    <property type="taxonomic scope" value="Bacteria"/>
</dbReference>
<dbReference type="HOGENOM" id="CLU_016077_5_0_5"/>
<dbReference type="OrthoDB" id="9805918at2"/>
<dbReference type="Proteomes" id="UP000007029">
    <property type="component" value="Chromosome"/>
</dbReference>
<dbReference type="GO" id="GO:0005525">
    <property type="term" value="F:GTP binding"/>
    <property type="evidence" value="ECO:0007669"/>
    <property type="project" value="UniProtKB-UniRule"/>
</dbReference>
<dbReference type="GO" id="GO:0042254">
    <property type="term" value="P:ribosome biogenesis"/>
    <property type="evidence" value="ECO:0007669"/>
    <property type="project" value="UniProtKB-KW"/>
</dbReference>
<dbReference type="CDD" id="cd01894">
    <property type="entry name" value="EngA1"/>
    <property type="match status" value="1"/>
</dbReference>
<dbReference type="CDD" id="cd01895">
    <property type="entry name" value="EngA2"/>
    <property type="match status" value="1"/>
</dbReference>
<dbReference type="FunFam" id="3.30.300.20:FF:000004">
    <property type="entry name" value="GTPase Der"/>
    <property type="match status" value="1"/>
</dbReference>
<dbReference type="Gene3D" id="3.30.300.20">
    <property type="match status" value="1"/>
</dbReference>
<dbReference type="Gene3D" id="3.40.50.300">
    <property type="entry name" value="P-loop containing nucleotide triphosphate hydrolases"/>
    <property type="match status" value="2"/>
</dbReference>
<dbReference type="HAMAP" id="MF_00195">
    <property type="entry name" value="GTPase_Der"/>
    <property type="match status" value="1"/>
</dbReference>
<dbReference type="InterPro" id="IPR031166">
    <property type="entry name" value="G_ENGA"/>
</dbReference>
<dbReference type="InterPro" id="IPR006073">
    <property type="entry name" value="GTP-bd"/>
</dbReference>
<dbReference type="InterPro" id="IPR016484">
    <property type="entry name" value="GTPase_Der"/>
</dbReference>
<dbReference type="InterPro" id="IPR032859">
    <property type="entry name" value="KH_dom-like"/>
</dbReference>
<dbReference type="InterPro" id="IPR015946">
    <property type="entry name" value="KH_dom-like_a/b"/>
</dbReference>
<dbReference type="InterPro" id="IPR027417">
    <property type="entry name" value="P-loop_NTPase"/>
</dbReference>
<dbReference type="InterPro" id="IPR005225">
    <property type="entry name" value="Small_GTP-bd"/>
</dbReference>
<dbReference type="NCBIfam" id="TIGR03594">
    <property type="entry name" value="GTPase_EngA"/>
    <property type="match status" value="1"/>
</dbReference>
<dbReference type="NCBIfam" id="TIGR00231">
    <property type="entry name" value="small_GTP"/>
    <property type="match status" value="2"/>
</dbReference>
<dbReference type="PANTHER" id="PTHR43834">
    <property type="entry name" value="GTPASE DER"/>
    <property type="match status" value="1"/>
</dbReference>
<dbReference type="PANTHER" id="PTHR43834:SF6">
    <property type="entry name" value="GTPASE DER"/>
    <property type="match status" value="1"/>
</dbReference>
<dbReference type="Pfam" id="PF14714">
    <property type="entry name" value="KH_dom-like"/>
    <property type="match status" value="1"/>
</dbReference>
<dbReference type="Pfam" id="PF01926">
    <property type="entry name" value="MMR_HSR1"/>
    <property type="match status" value="2"/>
</dbReference>
<dbReference type="PIRSF" id="PIRSF006485">
    <property type="entry name" value="GTP-binding_EngA"/>
    <property type="match status" value="1"/>
</dbReference>
<dbReference type="PRINTS" id="PR00449">
    <property type="entry name" value="RASTRNSFRMNG"/>
</dbReference>
<dbReference type="SUPFAM" id="SSF52540">
    <property type="entry name" value="P-loop containing nucleoside triphosphate hydrolases"/>
    <property type="match status" value="2"/>
</dbReference>
<dbReference type="PROSITE" id="PS51712">
    <property type="entry name" value="G_ENGA"/>
    <property type="match status" value="2"/>
</dbReference>
<feature type="chain" id="PRO_1000011727" description="GTPase Der">
    <location>
        <begin position="1"/>
        <end position="492"/>
    </location>
</feature>
<feature type="domain" description="EngA-type G 1">
    <location>
        <begin position="3"/>
        <end position="167"/>
    </location>
</feature>
<feature type="domain" description="EngA-type G 2">
    <location>
        <begin position="201"/>
        <end position="381"/>
    </location>
</feature>
<feature type="domain" description="KH-like" evidence="1">
    <location>
        <begin position="382"/>
        <end position="468"/>
    </location>
</feature>
<feature type="region of interest" description="Disordered" evidence="2">
    <location>
        <begin position="462"/>
        <end position="492"/>
    </location>
</feature>
<feature type="compositionally biased region" description="Basic residues" evidence="2">
    <location>
        <begin position="472"/>
        <end position="492"/>
    </location>
</feature>
<feature type="binding site" evidence="1">
    <location>
        <begin position="9"/>
        <end position="16"/>
    </location>
    <ligand>
        <name>GTP</name>
        <dbReference type="ChEBI" id="CHEBI:37565"/>
        <label>1</label>
    </ligand>
</feature>
<feature type="binding site" evidence="1">
    <location>
        <begin position="56"/>
        <end position="60"/>
    </location>
    <ligand>
        <name>GTP</name>
        <dbReference type="ChEBI" id="CHEBI:37565"/>
        <label>1</label>
    </ligand>
</feature>
<feature type="binding site" evidence="1">
    <location>
        <begin position="119"/>
        <end position="122"/>
    </location>
    <ligand>
        <name>GTP</name>
        <dbReference type="ChEBI" id="CHEBI:37565"/>
        <label>1</label>
    </ligand>
</feature>
<feature type="binding site" evidence="1">
    <location>
        <begin position="207"/>
        <end position="214"/>
    </location>
    <ligand>
        <name>GTP</name>
        <dbReference type="ChEBI" id="CHEBI:37565"/>
        <label>2</label>
    </ligand>
</feature>
<feature type="binding site" evidence="1">
    <location>
        <begin position="259"/>
        <end position="263"/>
    </location>
    <ligand>
        <name>GTP</name>
        <dbReference type="ChEBI" id="CHEBI:37565"/>
        <label>2</label>
    </ligand>
</feature>
<feature type="binding site" evidence="1">
    <location>
        <begin position="324"/>
        <end position="327"/>
    </location>
    <ligand>
        <name>GTP</name>
        <dbReference type="ChEBI" id="CHEBI:37565"/>
        <label>2</label>
    </ligand>
</feature>
<accession>Q169E2</accession>
<evidence type="ECO:0000255" key="1">
    <source>
        <dbReference type="HAMAP-Rule" id="MF_00195"/>
    </source>
</evidence>
<evidence type="ECO:0000256" key="2">
    <source>
        <dbReference type="SAM" id="MobiDB-lite"/>
    </source>
</evidence>
<proteinExistence type="inferred from homology"/>
<gene>
    <name evidence="1" type="primary">der</name>
    <name type="synonym">engA</name>
    <name type="ordered locus">RD1_1783</name>
</gene>
<protein>
    <recommendedName>
        <fullName evidence="1">GTPase Der</fullName>
    </recommendedName>
    <alternativeName>
        <fullName evidence="1">GTP-binding protein EngA</fullName>
    </alternativeName>
</protein>
<sequence length="492" mass="54256">MSFTLAIVGRPNVGKSTLFNRLVGKRLALVDDQPGVTRDLREGAARLADLRFTVIDTAGLEDVTDDSLQGRMRRLTERAVDMADICLFMVDARVGITPTDLVFADILRKRAGHVVLAANKAEGAAADAGVIEAYSLGLGEPIRLSAEHGEGLNDLYTHLMPLADAYAERAAEDAPETDVALDEDSGDMEAALRMPTANKPLQVAVVGRPNAGKSTLVNQILGEDRLLTGPEAGITRDAISLRTDWVGPEGDVIPMRIFDTAGMRKKAKVQEKLEKLSVGDGLRAVKFAEVVVVLLDAAIPFEQQDLRIADLAEREGRAVVVAVNKWDIEENKQAKLNELRESFERLLPQLRGAPLVTVSARTGRGLDRLHKAVLRAYEVWNRRVTTAQLNRWLAGMLEAHPPPAPQGKRIKLRYMTQAKTRPPGFVVMCSHPDKVPDSYNRYLVNGLRLDFDMPGTPIRLWMRGQNDANPYKGRKKAPPSKLRKHTDGRRKD</sequence>
<reference key="1">
    <citation type="journal article" date="2007" name="J. Bacteriol.">
        <title>The complete genome sequence of Roseobacter denitrificans reveals a mixotrophic rather than photosynthetic metabolism.</title>
        <authorList>
            <person name="Swingley W.D."/>
            <person name="Sadekar S."/>
            <person name="Mastrian S.D."/>
            <person name="Matthies H.J."/>
            <person name="Hao J."/>
            <person name="Ramos H."/>
            <person name="Acharya C.R."/>
            <person name="Conrad A.L."/>
            <person name="Taylor H.L."/>
            <person name="Dejesa L.C."/>
            <person name="Shah M.K."/>
            <person name="O'Huallachain M.E."/>
            <person name="Lince M.T."/>
            <person name="Blankenship R.E."/>
            <person name="Beatty J.T."/>
            <person name="Touchman J.W."/>
        </authorList>
    </citation>
    <scope>NUCLEOTIDE SEQUENCE [LARGE SCALE GENOMIC DNA]</scope>
    <source>
        <strain>ATCC 33942 / OCh 114</strain>
    </source>
</reference>
<organism>
    <name type="scientific">Roseobacter denitrificans (strain ATCC 33942 / OCh 114)</name>
    <name type="common">Erythrobacter sp. (strain OCh 114)</name>
    <name type="synonym">Roseobacter denitrificans</name>
    <dbReference type="NCBI Taxonomy" id="375451"/>
    <lineage>
        <taxon>Bacteria</taxon>
        <taxon>Pseudomonadati</taxon>
        <taxon>Pseudomonadota</taxon>
        <taxon>Alphaproteobacteria</taxon>
        <taxon>Rhodobacterales</taxon>
        <taxon>Roseobacteraceae</taxon>
        <taxon>Roseobacter</taxon>
    </lineage>
</organism>
<keyword id="KW-0342">GTP-binding</keyword>
<keyword id="KW-0547">Nucleotide-binding</keyword>
<keyword id="KW-1185">Reference proteome</keyword>
<keyword id="KW-0677">Repeat</keyword>
<keyword id="KW-0690">Ribosome biogenesis</keyword>